<evidence type="ECO:0000250" key="1"/>
<evidence type="ECO:0000255" key="2"/>
<evidence type="ECO:0000255" key="3">
    <source>
        <dbReference type="PROSITE-ProRule" id="PRU10040"/>
    </source>
</evidence>
<evidence type="ECO:0000305" key="4"/>
<accession>P09607</accession>
<accession>Q43144</accession>
<accession>Q43777</accession>
<sequence>MATPQQPLLTKTHKQNSIISFKILTFVVTLFVALFLVVFLVAPYQFEIKHSNLCKTAQDSQLCLSYVSDLISNEIVTSDSDGLSILKKFLVYSVHQMNNAIPVVRKIKNQINDIREQGALTDCLELLDLSVDLVCDSIAAIDKRSRSEHANAQSWLSGVLTNHVTCLDELDSFTKAMINGTNLDELISRAKVALAMLASVTTPNDEVLRPGLGKMPSWVSSRDRKLMESSGKDIGANAVVAKDGTGKYRTLAEAVAAAPDKSKTRYVIYVKRGTYKENVEVSSRKMNLMIIGDGMYATIITGSLNVVDGSTTFHSATLAAVGKGFILQDICIQNTAGPAKHQAVALRVGADKSVINRCRIDAYQDTLYAHSQRQFYRDSYVTGTIDFIFGNAAVVFQKCQLVARKPGKYQQNMVTAQGRTDPNQATGTSIQFCDIIASPDLKPVVKEFPTYLGRPWKKYSRTVVMESYLGGLIDPSGWAEWHGDFALKTLYYGEFMNNGPGAGTSKRVKWPGYHVITDPAEAMSFTVAKLIQGGSWLRSTDVAYVDGLYD</sequence>
<reference key="1">
    <citation type="journal article" date="1994" name="Plant Mol. Biol.">
        <title>Molecular characterisation of cDNA clones representing pectin esterase isozymes from tomato.</title>
        <authorList>
            <person name="Hall L.N."/>
            <person name="Bird C.R."/>
            <person name="Picton S."/>
            <person name="Tucker G.A."/>
            <person name="Seymour G.B."/>
            <person name="Grierson D."/>
        </authorList>
    </citation>
    <scope>NUCLEOTIDE SEQUENCE [MRNA]</scope>
    <source>
        <strain>cv. Ailsa Craig</strain>
        <tissue>Pericarp</tissue>
    </source>
</reference>
<reference key="2">
    <citation type="online journal article" date="1996" name="Plant Gene Register">
        <title>Isolation and nucleotide sequence of two cDNAs corresponding to tomato fruit pectin methylesterase genes.</title>
        <authorList>
            <person name="Turner L.A."/>
            <person name="Kausch K.D."/>
            <person name="Handa A.K."/>
        </authorList>
        <locator>PGR96-035</locator>
    </citation>
    <scope>NUCLEOTIDE SEQUENCE [MRNA]</scope>
    <source>
        <strain>cv. Rutgers</strain>
        <tissue>Fruit</tissue>
    </source>
</reference>
<reference key="3">
    <citation type="journal article" date="1988" name="Eur. J. Biochem.">
        <title>Identification and sequence determination of a cDNA clone for tomato pectin esterase.</title>
        <authorList>
            <person name="Ray J."/>
            <person name="Knapp J."/>
            <person name="Grierson D."/>
            <person name="Bird C."/>
            <person name="Schuch W."/>
        </authorList>
    </citation>
    <scope>NUCLEOTIDE SEQUENCE [MRNA] OF 177-550</scope>
</reference>
<dbReference type="EC" id="3.1.1.11"/>
<dbReference type="EMBL" id="X74639">
    <property type="protein sequence ID" value="CAA52704.1"/>
    <property type="molecule type" value="mRNA"/>
</dbReference>
<dbReference type="EMBL" id="U50985">
    <property type="protein sequence ID" value="AAB67739.1"/>
    <property type="molecule type" value="mRNA"/>
</dbReference>
<dbReference type="EMBL" id="X07910">
    <property type="protein sequence ID" value="CAA30746.1"/>
    <property type="molecule type" value="mRNA"/>
</dbReference>
<dbReference type="EMBL" id="A15983">
    <property type="protein sequence ID" value="CAA01257.1"/>
    <property type="molecule type" value="Unassigned_RNA"/>
</dbReference>
<dbReference type="PIR" id="S46528">
    <property type="entry name" value="S46528"/>
</dbReference>
<dbReference type="RefSeq" id="NP_001233948.1">
    <property type="nucleotide sequence ID" value="NM_001247019.1"/>
</dbReference>
<dbReference type="SMR" id="P09607"/>
<dbReference type="STRING" id="4081.P09607"/>
<dbReference type="GlyCosmos" id="P09607">
    <property type="glycosylation" value="1 site, No reported glycans"/>
</dbReference>
<dbReference type="PaxDb" id="4081-Solyc07g064180.2.1"/>
<dbReference type="GeneID" id="544289"/>
<dbReference type="KEGG" id="sly:544289"/>
<dbReference type="eggNOG" id="ENOG502QUQ5">
    <property type="taxonomic scope" value="Eukaryota"/>
</dbReference>
<dbReference type="HOGENOM" id="CLU_012243_9_2_1"/>
<dbReference type="InParanoid" id="P09607"/>
<dbReference type="OrthoDB" id="2019149at2759"/>
<dbReference type="PhylomeDB" id="P09607"/>
<dbReference type="BRENDA" id="3.1.1.11">
    <property type="organism ID" value="3101"/>
</dbReference>
<dbReference type="UniPathway" id="UPA00545">
    <property type="reaction ID" value="UER00823"/>
</dbReference>
<dbReference type="Proteomes" id="UP000004994">
    <property type="component" value="Unplaced"/>
</dbReference>
<dbReference type="ExpressionAtlas" id="P09607">
    <property type="expression patterns" value="baseline and differential"/>
</dbReference>
<dbReference type="GO" id="GO:0005576">
    <property type="term" value="C:extracellular region"/>
    <property type="evidence" value="ECO:0007669"/>
    <property type="project" value="UniProtKB-KW"/>
</dbReference>
<dbReference type="GO" id="GO:0030599">
    <property type="term" value="F:pectinesterase activity"/>
    <property type="evidence" value="ECO:0000318"/>
    <property type="project" value="GO_Central"/>
</dbReference>
<dbReference type="GO" id="GO:0046910">
    <property type="term" value="F:pectinesterase inhibitor activity"/>
    <property type="evidence" value="ECO:0000318"/>
    <property type="project" value="GO_Central"/>
</dbReference>
<dbReference type="GO" id="GO:0042545">
    <property type="term" value="P:cell wall modification"/>
    <property type="evidence" value="ECO:0007669"/>
    <property type="project" value="InterPro"/>
</dbReference>
<dbReference type="GO" id="GO:0009835">
    <property type="term" value="P:fruit ripening"/>
    <property type="evidence" value="ECO:0007669"/>
    <property type="project" value="UniProtKB-KW"/>
</dbReference>
<dbReference type="GO" id="GO:0045490">
    <property type="term" value="P:pectin catabolic process"/>
    <property type="evidence" value="ECO:0007669"/>
    <property type="project" value="UniProtKB-UniPathway"/>
</dbReference>
<dbReference type="CDD" id="cd15799">
    <property type="entry name" value="PMEI-like_4"/>
    <property type="match status" value="1"/>
</dbReference>
<dbReference type="FunFam" id="2.160.20.10:FF:000001">
    <property type="entry name" value="Pectinesterase"/>
    <property type="match status" value="1"/>
</dbReference>
<dbReference type="FunFam" id="1.20.140.40:FF:000015">
    <property type="entry name" value="Pectinesterase 3"/>
    <property type="match status" value="1"/>
</dbReference>
<dbReference type="Gene3D" id="1.20.140.40">
    <property type="entry name" value="Invertase/pectin methylesterase inhibitor family protein"/>
    <property type="match status" value="1"/>
</dbReference>
<dbReference type="Gene3D" id="2.160.20.10">
    <property type="entry name" value="Single-stranded right-handed beta-helix, Pectin lyase-like"/>
    <property type="match status" value="1"/>
</dbReference>
<dbReference type="InterPro" id="IPR035513">
    <property type="entry name" value="Invertase/methylesterase_inhib"/>
</dbReference>
<dbReference type="InterPro" id="IPR012334">
    <property type="entry name" value="Pectin_lyas_fold"/>
</dbReference>
<dbReference type="InterPro" id="IPR011050">
    <property type="entry name" value="Pectin_lyase_fold/virulence"/>
</dbReference>
<dbReference type="InterPro" id="IPR033131">
    <property type="entry name" value="Pectinesterase_Asp_AS"/>
</dbReference>
<dbReference type="InterPro" id="IPR000070">
    <property type="entry name" value="Pectinesterase_cat"/>
</dbReference>
<dbReference type="InterPro" id="IPR006501">
    <property type="entry name" value="Pectinesterase_inhib_dom"/>
</dbReference>
<dbReference type="InterPro" id="IPR018040">
    <property type="entry name" value="Pectinesterase_Tyr_AS"/>
</dbReference>
<dbReference type="NCBIfam" id="TIGR01614">
    <property type="entry name" value="PME_inhib"/>
    <property type="match status" value="1"/>
</dbReference>
<dbReference type="PANTHER" id="PTHR31707">
    <property type="entry name" value="PECTINESTERASE"/>
    <property type="match status" value="1"/>
</dbReference>
<dbReference type="Pfam" id="PF01095">
    <property type="entry name" value="Pectinesterase"/>
    <property type="match status" value="1"/>
</dbReference>
<dbReference type="Pfam" id="PF04043">
    <property type="entry name" value="PMEI"/>
    <property type="match status" value="1"/>
</dbReference>
<dbReference type="SMART" id="SM00856">
    <property type="entry name" value="PMEI"/>
    <property type="match status" value="1"/>
</dbReference>
<dbReference type="SUPFAM" id="SSF51126">
    <property type="entry name" value="Pectin lyase-like"/>
    <property type="match status" value="1"/>
</dbReference>
<dbReference type="SUPFAM" id="SSF101148">
    <property type="entry name" value="Plant invertase/pectin methylesterase inhibitor"/>
    <property type="match status" value="1"/>
</dbReference>
<dbReference type="PROSITE" id="PS00800">
    <property type="entry name" value="PECTINESTERASE_1"/>
    <property type="match status" value="1"/>
</dbReference>
<dbReference type="PROSITE" id="PS00503">
    <property type="entry name" value="PECTINESTERASE_2"/>
    <property type="match status" value="1"/>
</dbReference>
<feature type="signal peptide" evidence="2">
    <location>
        <begin position="1"/>
        <end status="unknown"/>
    </location>
</feature>
<feature type="propeptide" id="PRO_0000023488" evidence="2">
    <location>
        <begin status="unknown"/>
        <end position="233"/>
    </location>
</feature>
<feature type="chain" id="PRO_0000023489" description="Pectinesterase 2.1">
    <location>
        <begin position="234"/>
        <end position="550"/>
    </location>
</feature>
<feature type="active site" description="Proton donor" evidence="3">
    <location>
        <position position="365"/>
    </location>
</feature>
<feature type="active site" description="Nucleophile" evidence="3">
    <location>
        <position position="386"/>
    </location>
</feature>
<feature type="binding site" evidence="1">
    <location>
        <position position="312"/>
    </location>
    <ligand>
        <name>substrate</name>
    </ligand>
</feature>
<feature type="binding site" evidence="1">
    <location>
        <position position="342"/>
    </location>
    <ligand>
        <name>substrate</name>
    </ligand>
</feature>
<feature type="binding site" evidence="1">
    <location>
        <position position="454"/>
    </location>
    <ligand>
        <name>substrate</name>
    </ligand>
</feature>
<feature type="binding site" evidence="1">
    <location>
        <position position="456"/>
    </location>
    <ligand>
        <name>substrate</name>
    </ligand>
</feature>
<feature type="site" description="Transition state stabilizer" evidence="1">
    <location>
        <position position="364"/>
    </location>
</feature>
<feature type="glycosylation site" description="N-linked (GlcNAc...) asparagine" evidence="2">
    <location>
        <position position="179"/>
    </location>
</feature>
<feature type="disulfide bond" evidence="1">
    <location>
        <begin position="331"/>
        <end position="358"/>
    </location>
</feature>
<feature type="disulfide bond" evidence="1">
    <location>
        <begin position="399"/>
        <end position="433"/>
    </location>
</feature>
<feature type="sequence conflict" description="In Ref. 3; CAA30746/CAA01257." evidence="4" ref="3">
    <original>RD</original>
    <variation>QS</variation>
    <location>
        <begin position="377"/>
        <end position="378"/>
    </location>
</feature>
<feature type="sequence conflict" description="In Ref. 3; CAA30746/CAA01257." evidence="4" ref="3">
    <original>Y</original>
    <variation>S</variation>
    <location>
        <position position="468"/>
    </location>
</feature>
<feature type="sequence conflict" description="In Ref. 2; AAB67739." evidence="4" ref="2">
    <original>V</original>
    <variation>C</variation>
    <location>
        <position position="515"/>
    </location>
</feature>
<feature type="sequence conflict" description="In Ref. 3; CAA30746." evidence="4" ref="3">
    <original>D</original>
    <variation>DYSDIKLLFVYVTRHL</variation>
    <location>
        <position position="550"/>
    </location>
</feature>
<keyword id="KW-0063">Aspartyl esterase</keyword>
<keyword id="KW-0134">Cell wall</keyword>
<keyword id="KW-0961">Cell wall biogenesis/degradation</keyword>
<keyword id="KW-1015">Disulfide bond</keyword>
<keyword id="KW-0292">Fruit ripening</keyword>
<keyword id="KW-0325">Glycoprotein</keyword>
<keyword id="KW-0378">Hydrolase</keyword>
<keyword id="KW-1185">Reference proteome</keyword>
<keyword id="KW-0964">Secreted</keyword>
<keyword id="KW-0732">Signal</keyword>
<keyword id="KW-0865">Zymogen</keyword>
<proteinExistence type="evidence at transcript level"/>
<protein>
    <recommendedName>
        <fullName>Pectinesterase 2.1</fullName>
        <shortName>PE 2.1</shortName>
        <ecNumber>3.1.1.11</ecNumber>
    </recommendedName>
    <alternativeName>
        <fullName>Pectin methylesterase 2.1</fullName>
    </alternativeName>
</protein>
<name>PME21_SOLLC</name>
<organism>
    <name type="scientific">Solanum lycopersicum</name>
    <name type="common">Tomato</name>
    <name type="synonym">Lycopersicon esculentum</name>
    <dbReference type="NCBI Taxonomy" id="4081"/>
    <lineage>
        <taxon>Eukaryota</taxon>
        <taxon>Viridiplantae</taxon>
        <taxon>Streptophyta</taxon>
        <taxon>Embryophyta</taxon>
        <taxon>Tracheophyta</taxon>
        <taxon>Spermatophyta</taxon>
        <taxon>Magnoliopsida</taxon>
        <taxon>eudicotyledons</taxon>
        <taxon>Gunneridae</taxon>
        <taxon>Pentapetalae</taxon>
        <taxon>asterids</taxon>
        <taxon>lamiids</taxon>
        <taxon>Solanales</taxon>
        <taxon>Solanaceae</taxon>
        <taxon>Solanoideae</taxon>
        <taxon>Solaneae</taxon>
        <taxon>Solanum</taxon>
        <taxon>Solanum subgen. Lycopersicon</taxon>
    </lineage>
</organism>
<gene>
    <name type="primary">PME2.1</name>
</gene>
<comment type="function">
    <text>Pectinesterase may play a role in cell wall metabolism during fruit growth and development prior to ripening and may be required for preparing cell walls for softening by polygalacturonase during fruit ripening.</text>
</comment>
<comment type="catalytic activity">
    <reaction>
        <text>[(1-&gt;4)-alpha-D-galacturonosyl methyl ester](n) + n H2O = [(1-&gt;4)-alpha-D-galacturonosyl](n) + n methanol + n H(+)</text>
        <dbReference type="Rhea" id="RHEA:22380"/>
        <dbReference type="Rhea" id="RHEA-COMP:14570"/>
        <dbReference type="Rhea" id="RHEA-COMP:14573"/>
        <dbReference type="ChEBI" id="CHEBI:15377"/>
        <dbReference type="ChEBI" id="CHEBI:15378"/>
        <dbReference type="ChEBI" id="CHEBI:17790"/>
        <dbReference type="ChEBI" id="CHEBI:140522"/>
        <dbReference type="ChEBI" id="CHEBI:140523"/>
        <dbReference type="EC" id="3.1.1.11"/>
    </reaction>
</comment>
<comment type="pathway">
    <text>Glycan metabolism; pectin degradation; 2-dehydro-3-deoxy-D-gluconate from pectin: step 1/5.</text>
</comment>
<comment type="subcellular location">
    <subcellularLocation>
        <location>Secreted</location>
        <location>Cell wall</location>
    </subcellularLocation>
</comment>
<comment type="developmental stage">
    <text>In ripening fruit.</text>
</comment>
<comment type="miscellaneous">
    <text>The PMEI region may act as an autoinhibitory domain and prevent untimely PME activity during transport.</text>
</comment>
<comment type="similarity">
    <text evidence="4">In the N-terminal section; belongs to the PMEI family.</text>
</comment>
<comment type="similarity">
    <text evidence="4">In the C-terminal section; belongs to the pectinesterase family.</text>
</comment>